<reference key="1">
    <citation type="submission" date="2007-09" db="EMBL/GenBank/DDBJ databases">
        <title>Complete genome sequence of Rickettsia rickettsii.</title>
        <authorList>
            <person name="Madan A."/>
            <person name="Fahey J."/>
            <person name="Helton E."/>
            <person name="Ketteman M."/>
            <person name="Madan A."/>
            <person name="Rodrigues S."/>
            <person name="Sanchez A."/>
            <person name="Dasch G."/>
            <person name="Eremeeva M."/>
        </authorList>
    </citation>
    <scope>NUCLEOTIDE SEQUENCE [LARGE SCALE GENOMIC DNA]</scope>
    <source>
        <strain>Sheila Smith</strain>
    </source>
</reference>
<reference key="2">
    <citation type="journal article" date="2003" name="J. Bacteriol.">
        <title>Molecular and functional analysis of the lepB gene, encoding a type I signal peptidase from Rickettsia rickettsii and Rickettsia typhi.</title>
        <authorList>
            <person name="Rahman M.S."/>
            <person name="Simser J.A."/>
            <person name="Macaluso K.R."/>
            <person name="Azad A.F."/>
        </authorList>
    </citation>
    <scope>NUCLEOTIDE SEQUENCE [GENOMIC DNA] OF 1-101</scope>
    <scope>TRANSCRIPT ANALYSIS (OPERON STRUCTURE)</scope>
</reference>
<protein>
    <recommendedName>
        <fullName evidence="1">Ribonuclease 3</fullName>
        <ecNumber evidence="1">3.1.26.3</ecNumber>
    </recommendedName>
    <alternativeName>
        <fullName evidence="1">Ribonuclease III</fullName>
        <shortName evidence="1">RNase III</shortName>
    </alternativeName>
</protein>
<comment type="function">
    <text evidence="1">Digests double-stranded RNA. Involved in the processing of primary rRNA transcript to yield the immediate precursors to the large and small rRNAs (23S and 16S). Processes some mRNAs, and tRNAs when they are encoded in the rRNA operon. Processes pre-crRNA and tracrRNA of type II CRISPR loci if present in the organism.</text>
</comment>
<comment type="catalytic activity">
    <reaction evidence="1">
        <text>Endonucleolytic cleavage to 5'-phosphomonoester.</text>
        <dbReference type="EC" id="3.1.26.3"/>
    </reaction>
</comment>
<comment type="cofactor">
    <cofactor evidence="1">
        <name>Mg(2+)</name>
        <dbReference type="ChEBI" id="CHEBI:18420"/>
    </cofactor>
</comment>
<comment type="subunit">
    <text evidence="1">Homodimer.</text>
</comment>
<comment type="subcellular location">
    <subcellularLocation>
        <location evidence="1">Cytoplasm</location>
    </subcellularLocation>
</comment>
<comment type="miscellaneous">
    <text>Belongs to an operon consisting of at least secF-nuoF-lepB-rnc.</text>
</comment>
<comment type="similarity">
    <text evidence="1">Belongs to the ribonuclease III family.</text>
</comment>
<feature type="chain" id="PRO_0000316270" description="Ribonuclease 3">
    <location>
        <begin position="1"/>
        <end position="227"/>
    </location>
</feature>
<feature type="domain" description="RNase III" evidence="1">
    <location>
        <begin position="4"/>
        <end position="133"/>
    </location>
</feature>
<feature type="domain" description="DRBM" evidence="1">
    <location>
        <begin position="158"/>
        <end position="226"/>
    </location>
</feature>
<feature type="active site" evidence="1">
    <location>
        <position position="50"/>
    </location>
</feature>
<feature type="active site" evidence="1">
    <location>
        <position position="122"/>
    </location>
</feature>
<feature type="binding site" evidence="1">
    <location>
        <position position="46"/>
    </location>
    <ligand>
        <name>Mg(2+)</name>
        <dbReference type="ChEBI" id="CHEBI:18420"/>
    </ligand>
</feature>
<feature type="binding site" evidence="1">
    <location>
        <position position="119"/>
    </location>
    <ligand>
        <name>Mg(2+)</name>
        <dbReference type="ChEBI" id="CHEBI:18420"/>
    </ligand>
</feature>
<feature type="binding site" evidence="1">
    <location>
        <position position="122"/>
    </location>
    <ligand>
        <name>Mg(2+)</name>
        <dbReference type="ChEBI" id="CHEBI:18420"/>
    </ligand>
</feature>
<sequence>MESFEKLEKLLSYSFKNKELLIEALSHPSLRQHHEYKDDKDYERLEFLGDAVLNLVITEILFRNFANYNEGNLAKIRSYLVCKETICMVGAKLTLKNYIIMTHGEEVAGGRDNLNNIENATEALIAAIYLDSNIETTHDIIEKLWAEFIKVQNLTDYDPKTALQEWAQASDHHLPIYRLIKREGASHSSTFTVLVKVKDYEQTGTGHAIKEAEKNAARSLLHRLKND</sequence>
<organism>
    <name type="scientific">Rickettsia rickettsii (strain Sheila Smith)</name>
    <dbReference type="NCBI Taxonomy" id="392021"/>
    <lineage>
        <taxon>Bacteria</taxon>
        <taxon>Pseudomonadati</taxon>
        <taxon>Pseudomonadota</taxon>
        <taxon>Alphaproteobacteria</taxon>
        <taxon>Rickettsiales</taxon>
        <taxon>Rickettsiaceae</taxon>
        <taxon>Rickettsieae</taxon>
        <taxon>Rickettsia</taxon>
        <taxon>spotted fever group</taxon>
    </lineage>
</organism>
<dbReference type="EC" id="3.1.26.3" evidence="1"/>
<dbReference type="EMBL" id="CP000848">
    <property type="protein sequence ID" value="ABV75763.1"/>
    <property type="molecule type" value="Genomic_DNA"/>
</dbReference>
<dbReference type="EMBL" id="AY134668">
    <property type="status" value="NOT_ANNOTATED_CDS"/>
    <property type="molecule type" value="Genomic_DNA"/>
</dbReference>
<dbReference type="RefSeq" id="WP_004996667.1">
    <property type="nucleotide sequence ID" value="NZ_CP121767.1"/>
</dbReference>
<dbReference type="SMR" id="A8GQT8"/>
<dbReference type="GeneID" id="95361874"/>
<dbReference type="KEGG" id="rri:A1G_00905"/>
<dbReference type="HOGENOM" id="CLU_000907_1_1_5"/>
<dbReference type="Proteomes" id="UP000006832">
    <property type="component" value="Chromosome"/>
</dbReference>
<dbReference type="GO" id="GO:0005737">
    <property type="term" value="C:cytoplasm"/>
    <property type="evidence" value="ECO:0007669"/>
    <property type="project" value="UniProtKB-SubCell"/>
</dbReference>
<dbReference type="GO" id="GO:0003725">
    <property type="term" value="F:double-stranded RNA binding"/>
    <property type="evidence" value="ECO:0007669"/>
    <property type="project" value="TreeGrafter"/>
</dbReference>
<dbReference type="GO" id="GO:0046872">
    <property type="term" value="F:metal ion binding"/>
    <property type="evidence" value="ECO:0007669"/>
    <property type="project" value="UniProtKB-KW"/>
</dbReference>
<dbReference type="GO" id="GO:0004525">
    <property type="term" value="F:ribonuclease III activity"/>
    <property type="evidence" value="ECO:0007669"/>
    <property type="project" value="UniProtKB-UniRule"/>
</dbReference>
<dbReference type="GO" id="GO:0019843">
    <property type="term" value="F:rRNA binding"/>
    <property type="evidence" value="ECO:0007669"/>
    <property type="project" value="UniProtKB-KW"/>
</dbReference>
<dbReference type="GO" id="GO:0006397">
    <property type="term" value="P:mRNA processing"/>
    <property type="evidence" value="ECO:0007669"/>
    <property type="project" value="UniProtKB-UniRule"/>
</dbReference>
<dbReference type="GO" id="GO:0010468">
    <property type="term" value="P:regulation of gene expression"/>
    <property type="evidence" value="ECO:0007669"/>
    <property type="project" value="TreeGrafter"/>
</dbReference>
<dbReference type="GO" id="GO:0006364">
    <property type="term" value="P:rRNA processing"/>
    <property type="evidence" value="ECO:0007669"/>
    <property type="project" value="UniProtKB-UniRule"/>
</dbReference>
<dbReference type="GO" id="GO:0008033">
    <property type="term" value="P:tRNA processing"/>
    <property type="evidence" value="ECO:0007669"/>
    <property type="project" value="UniProtKB-KW"/>
</dbReference>
<dbReference type="CDD" id="cd10845">
    <property type="entry name" value="DSRM_RNAse_III_family"/>
    <property type="match status" value="1"/>
</dbReference>
<dbReference type="CDD" id="cd00593">
    <property type="entry name" value="RIBOc"/>
    <property type="match status" value="1"/>
</dbReference>
<dbReference type="FunFam" id="1.10.1520.10:FF:000001">
    <property type="entry name" value="Ribonuclease 3"/>
    <property type="match status" value="1"/>
</dbReference>
<dbReference type="Gene3D" id="3.30.160.20">
    <property type="match status" value="1"/>
</dbReference>
<dbReference type="Gene3D" id="1.10.1520.10">
    <property type="entry name" value="Ribonuclease III domain"/>
    <property type="match status" value="1"/>
</dbReference>
<dbReference type="HAMAP" id="MF_00104">
    <property type="entry name" value="RNase_III"/>
    <property type="match status" value="1"/>
</dbReference>
<dbReference type="InterPro" id="IPR014720">
    <property type="entry name" value="dsRBD_dom"/>
</dbReference>
<dbReference type="InterPro" id="IPR011907">
    <property type="entry name" value="RNase_III"/>
</dbReference>
<dbReference type="InterPro" id="IPR000999">
    <property type="entry name" value="RNase_III_dom"/>
</dbReference>
<dbReference type="InterPro" id="IPR036389">
    <property type="entry name" value="RNase_III_sf"/>
</dbReference>
<dbReference type="NCBIfam" id="TIGR02191">
    <property type="entry name" value="RNaseIII"/>
    <property type="match status" value="1"/>
</dbReference>
<dbReference type="PANTHER" id="PTHR11207:SF0">
    <property type="entry name" value="RIBONUCLEASE 3"/>
    <property type="match status" value="1"/>
</dbReference>
<dbReference type="PANTHER" id="PTHR11207">
    <property type="entry name" value="RIBONUCLEASE III"/>
    <property type="match status" value="1"/>
</dbReference>
<dbReference type="Pfam" id="PF00035">
    <property type="entry name" value="dsrm"/>
    <property type="match status" value="1"/>
</dbReference>
<dbReference type="Pfam" id="PF14622">
    <property type="entry name" value="Ribonucleas_3_3"/>
    <property type="match status" value="1"/>
</dbReference>
<dbReference type="SMART" id="SM00358">
    <property type="entry name" value="DSRM"/>
    <property type="match status" value="1"/>
</dbReference>
<dbReference type="SMART" id="SM00535">
    <property type="entry name" value="RIBOc"/>
    <property type="match status" value="1"/>
</dbReference>
<dbReference type="SUPFAM" id="SSF54768">
    <property type="entry name" value="dsRNA-binding domain-like"/>
    <property type="match status" value="1"/>
</dbReference>
<dbReference type="SUPFAM" id="SSF69065">
    <property type="entry name" value="RNase III domain-like"/>
    <property type="match status" value="1"/>
</dbReference>
<dbReference type="PROSITE" id="PS50137">
    <property type="entry name" value="DS_RBD"/>
    <property type="match status" value="1"/>
</dbReference>
<dbReference type="PROSITE" id="PS00517">
    <property type="entry name" value="RNASE_3_1"/>
    <property type="match status" value="1"/>
</dbReference>
<dbReference type="PROSITE" id="PS50142">
    <property type="entry name" value="RNASE_3_2"/>
    <property type="match status" value="1"/>
</dbReference>
<accession>A8GQT8</accession>
<gene>
    <name evidence="1" type="primary">rnc</name>
    <name type="ordered locus">A1G_00905</name>
</gene>
<name>RNC_RICRS</name>
<keyword id="KW-0963">Cytoplasm</keyword>
<keyword id="KW-0255">Endonuclease</keyword>
<keyword id="KW-0378">Hydrolase</keyword>
<keyword id="KW-0460">Magnesium</keyword>
<keyword id="KW-0479">Metal-binding</keyword>
<keyword id="KW-0507">mRNA processing</keyword>
<keyword id="KW-0540">Nuclease</keyword>
<keyword id="KW-0694">RNA-binding</keyword>
<keyword id="KW-0698">rRNA processing</keyword>
<keyword id="KW-0699">rRNA-binding</keyword>
<keyword id="KW-0819">tRNA processing</keyword>
<proteinExistence type="evidence at transcript level"/>
<evidence type="ECO:0000255" key="1">
    <source>
        <dbReference type="HAMAP-Rule" id="MF_00104"/>
    </source>
</evidence>